<keyword id="KW-0997">Cell inner membrane</keyword>
<keyword id="KW-1003">Cell membrane</keyword>
<keyword id="KW-0249">Electron transport</keyword>
<keyword id="KW-0449">Lipoprotein</keyword>
<keyword id="KW-0472">Membrane</keyword>
<keyword id="KW-0560">Oxidoreductase</keyword>
<keyword id="KW-0564">Palmitate</keyword>
<keyword id="KW-1185">Reference proteome</keyword>
<keyword id="KW-0679">Respiratory chain</keyword>
<keyword id="KW-0732">Signal</keyword>
<keyword id="KW-0812">Transmembrane</keyword>
<keyword id="KW-1133">Transmembrane helix</keyword>
<keyword id="KW-0813">Transport</keyword>
<reference key="1">
    <citation type="journal article" date="2002" name="Proc. Natl. Acad. Sci. U.S.A.">
        <title>Extensive mosaic structure revealed by the complete genome sequence of uropathogenic Escherichia coli.</title>
        <authorList>
            <person name="Welch R.A."/>
            <person name="Burland V."/>
            <person name="Plunkett G. III"/>
            <person name="Redford P."/>
            <person name="Roesch P."/>
            <person name="Rasko D."/>
            <person name="Buckles E.L."/>
            <person name="Liou S.-R."/>
            <person name="Boutin A."/>
            <person name="Hackett J."/>
            <person name="Stroud D."/>
            <person name="Mayhew G.F."/>
            <person name="Rose D.J."/>
            <person name="Zhou S."/>
            <person name="Schwartz D.C."/>
            <person name="Perna N.T."/>
            <person name="Mobley H.L.T."/>
            <person name="Donnenberg M.S."/>
            <person name="Blattner F.R."/>
        </authorList>
    </citation>
    <scope>NUCLEOTIDE SEQUENCE [LARGE SCALE GENOMIC DNA]</scope>
    <source>
        <strain>CFT073 / ATCC 700928 / UPEC</strain>
    </source>
</reference>
<gene>
    <name type="primary">cyoA</name>
    <name type="ordered locus">c0543</name>
</gene>
<organism>
    <name type="scientific">Escherichia coli O6:H1 (strain CFT073 / ATCC 700928 / UPEC)</name>
    <dbReference type="NCBI Taxonomy" id="199310"/>
    <lineage>
        <taxon>Bacteria</taxon>
        <taxon>Pseudomonadati</taxon>
        <taxon>Pseudomonadota</taxon>
        <taxon>Gammaproteobacteria</taxon>
        <taxon>Enterobacterales</taxon>
        <taxon>Enterobacteriaceae</taxon>
        <taxon>Escherichia</taxon>
    </lineage>
</organism>
<protein>
    <recommendedName>
        <fullName>Cytochrome bo(3) ubiquinol oxidase subunit 2</fullName>
    </recommendedName>
    <alternativeName>
        <fullName>Cytochrome o ubiquinol oxidase subunit 2</fullName>
        <shortName>Cytochrome o subunit 2</shortName>
    </alternativeName>
    <alternativeName>
        <fullName>Oxidase bo(3) subunit 2</fullName>
    </alternativeName>
    <alternativeName>
        <fullName>Ubiquinol oxidase chain B</fullName>
    </alternativeName>
    <alternativeName>
        <fullName>Ubiquinol oxidase polypeptide II</fullName>
    </alternativeName>
    <alternativeName>
        <fullName>Ubiquinol oxidase subunit 2</fullName>
    </alternativeName>
</protein>
<name>CYOA_ECOL6</name>
<feature type="signal peptide" evidence="2">
    <location>
        <begin position="1"/>
        <end position="24"/>
    </location>
</feature>
<feature type="chain" id="PRO_0000042668" description="Cytochrome bo(3) ubiquinol oxidase subunit 2">
    <location>
        <begin position="25"/>
        <end position="315"/>
    </location>
</feature>
<feature type="topological domain" description="Periplasmic" evidence="4">
    <location>
        <begin position="25"/>
        <end position="50"/>
    </location>
</feature>
<feature type="transmembrane region" description="Helical" evidence="4">
    <location>
        <begin position="51"/>
        <end position="68"/>
    </location>
</feature>
<feature type="topological domain" description="Cytoplasmic" evidence="4">
    <location>
        <begin position="69"/>
        <end position="92"/>
    </location>
</feature>
<feature type="transmembrane region" description="Helical" evidence="4">
    <location>
        <begin position="93"/>
        <end position="111"/>
    </location>
</feature>
<feature type="topological domain" description="Periplasmic" evidence="4">
    <location>
        <begin position="112"/>
        <end position="315"/>
    </location>
</feature>
<feature type="region of interest" description="Disordered" evidence="3">
    <location>
        <begin position="288"/>
        <end position="315"/>
    </location>
</feature>
<feature type="compositionally biased region" description="Basic and acidic residues" evidence="3">
    <location>
        <begin position="294"/>
        <end position="315"/>
    </location>
</feature>
<feature type="lipid moiety-binding region" description="N-palmitoyl cysteine" evidence="2">
    <location>
        <position position="25"/>
    </location>
</feature>
<feature type="lipid moiety-binding region" description="S-diacylglycerol cysteine" evidence="2">
    <location>
        <position position="25"/>
    </location>
</feature>
<accession>P0ABJ2</accession>
<accession>P18400</accession>
<dbReference type="EMBL" id="AE014075">
    <property type="protein sequence ID" value="AAN79021.1"/>
    <property type="molecule type" value="Genomic_DNA"/>
</dbReference>
<dbReference type="RefSeq" id="WP_001239436.1">
    <property type="nucleotide sequence ID" value="NZ_CP051263.1"/>
</dbReference>
<dbReference type="SMR" id="P0ABJ2"/>
<dbReference type="STRING" id="199310.c0543"/>
<dbReference type="GeneID" id="86862977"/>
<dbReference type="KEGG" id="ecc:c0543"/>
<dbReference type="eggNOG" id="COG1622">
    <property type="taxonomic scope" value="Bacteria"/>
</dbReference>
<dbReference type="HOGENOM" id="CLU_036876_6_1_6"/>
<dbReference type="BioCyc" id="ECOL199310:C0543-MONOMER"/>
<dbReference type="Proteomes" id="UP000001410">
    <property type="component" value="Chromosome"/>
</dbReference>
<dbReference type="GO" id="GO:0005886">
    <property type="term" value="C:plasma membrane"/>
    <property type="evidence" value="ECO:0007669"/>
    <property type="project" value="UniProtKB-SubCell"/>
</dbReference>
<dbReference type="GO" id="GO:0005507">
    <property type="term" value="F:copper ion binding"/>
    <property type="evidence" value="ECO:0007669"/>
    <property type="project" value="InterPro"/>
</dbReference>
<dbReference type="GO" id="GO:0009486">
    <property type="term" value="F:cytochrome bo3 ubiquinol oxidase activity"/>
    <property type="evidence" value="ECO:0007669"/>
    <property type="project" value="InterPro"/>
</dbReference>
<dbReference type="GO" id="GO:0004129">
    <property type="term" value="F:cytochrome-c oxidase activity"/>
    <property type="evidence" value="ECO:0007669"/>
    <property type="project" value="InterPro"/>
</dbReference>
<dbReference type="GO" id="GO:0016682">
    <property type="term" value="F:oxidoreductase activity, acting on diphenols and related substances as donors, oxygen as acceptor"/>
    <property type="evidence" value="ECO:0007669"/>
    <property type="project" value="InterPro"/>
</dbReference>
<dbReference type="GO" id="GO:0042773">
    <property type="term" value="P:ATP synthesis coupled electron transport"/>
    <property type="evidence" value="ECO:0007669"/>
    <property type="project" value="TreeGrafter"/>
</dbReference>
<dbReference type="CDD" id="cd04212">
    <property type="entry name" value="CuRO_UO_II"/>
    <property type="match status" value="1"/>
</dbReference>
<dbReference type="FunFam" id="1.10.287.90:FF:000002">
    <property type="entry name" value="Ubiquinol oxidase subunit 2"/>
    <property type="match status" value="1"/>
</dbReference>
<dbReference type="FunFam" id="2.60.40.420:FF:000008">
    <property type="entry name" value="Ubiquinol oxidase subunit 2"/>
    <property type="match status" value="1"/>
</dbReference>
<dbReference type="Gene3D" id="1.10.287.90">
    <property type="match status" value="1"/>
</dbReference>
<dbReference type="Gene3D" id="2.60.40.420">
    <property type="entry name" value="Cupredoxins - blue copper proteins"/>
    <property type="match status" value="1"/>
</dbReference>
<dbReference type="InterPro" id="IPR045187">
    <property type="entry name" value="CcO_II"/>
</dbReference>
<dbReference type="InterPro" id="IPR002429">
    <property type="entry name" value="CcO_II-like_C"/>
</dbReference>
<dbReference type="InterPro" id="IPR010514">
    <property type="entry name" value="COX_ARM"/>
</dbReference>
<dbReference type="InterPro" id="IPR008972">
    <property type="entry name" value="Cupredoxin"/>
</dbReference>
<dbReference type="InterPro" id="IPR034227">
    <property type="entry name" value="CuRO_UO_II"/>
</dbReference>
<dbReference type="InterPro" id="IPR011759">
    <property type="entry name" value="Cyt_c_oxidase_su2_TM_dom"/>
</dbReference>
<dbReference type="InterPro" id="IPR036257">
    <property type="entry name" value="Cyt_c_oxidase_su2_TM_sf"/>
</dbReference>
<dbReference type="InterPro" id="IPR006333">
    <property type="entry name" value="Cyt_o_ubiquinol_oxidase_su2"/>
</dbReference>
<dbReference type="NCBIfam" id="TIGR01433">
    <property type="entry name" value="CyoA"/>
    <property type="match status" value="1"/>
</dbReference>
<dbReference type="NCBIfam" id="NF007816">
    <property type="entry name" value="PRK10525.1"/>
    <property type="match status" value="1"/>
</dbReference>
<dbReference type="PANTHER" id="PTHR22888:SF18">
    <property type="entry name" value="CYTOCHROME BO(3) UBIQUINOL OXIDASE SUBUNIT 2"/>
    <property type="match status" value="1"/>
</dbReference>
<dbReference type="PANTHER" id="PTHR22888">
    <property type="entry name" value="CYTOCHROME C OXIDASE, SUBUNIT II"/>
    <property type="match status" value="1"/>
</dbReference>
<dbReference type="Pfam" id="PF00116">
    <property type="entry name" value="COX2"/>
    <property type="match status" value="1"/>
</dbReference>
<dbReference type="Pfam" id="PF06481">
    <property type="entry name" value="COX_ARM"/>
    <property type="match status" value="1"/>
</dbReference>
<dbReference type="PIRSF" id="PIRSF000292">
    <property type="entry name" value="Ubi_od_II"/>
    <property type="match status" value="1"/>
</dbReference>
<dbReference type="SUPFAM" id="SSF49503">
    <property type="entry name" value="Cupredoxins"/>
    <property type="match status" value="1"/>
</dbReference>
<dbReference type="SUPFAM" id="SSF81464">
    <property type="entry name" value="Cytochrome c oxidase subunit II-like, transmembrane region"/>
    <property type="match status" value="1"/>
</dbReference>
<dbReference type="PROSITE" id="PS50857">
    <property type="entry name" value="COX2_CUA"/>
    <property type="match status" value="1"/>
</dbReference>
<dbReference type="PROSITE" id="PS50999">
    <property type="entry name" value="COX2_TM"/>
    <property type="match status" value="1"/>
</dbReference>
<dbReference type="PROSITE" id="PS51257">
    <property type="entry name" value="PROKAR_LIPOPROTEIN"/>
    <property type="match status" value="1"/>
</dbReference>
<evidence type="ECO:0000250" key="1"/>
<evidence type="ECO:0000255" key="2">
    <source>
        <dbReference type="PROSITE-ProRule" id="PRU00303"/>
    </source>
</evidence>
<evidence type="ECO:0000256" key="3">
    <source>
        <dbReference type="SAM" id="MobiDB-lite"/>
    </source>
</evidence>
<evidence type="ECO:0000305" key="4"/>
<proteinExistence type="inferred from homology"/>
<sequence>MRLRKYNKSLGWLSLFAGTVLLSGCNSALLDPKGQIGLEQRSLILTAFGLMLIVVIPAILMAVGFAWKYRASNKDAKYSPNWSHSNKVEAVVWTVPILIIIFLAVLTWKTTHALEPSKPLAHDEKPITIEVVSMDWKWFFIYPEQGIATVNEIAFPANTPVYFKVTSNSVMNSFFIPRLGSQIYAMAGMQTRLHLIANEPGTYDGISASYSGPGFSGMKFKAIATPDRAAFDQWVAKAKQSPNTMSDMAAFEKLAAPSEYNQVEYFSNVKPDLFADVINKFMAHGKSMDMTQPEGEHSAHEGMEGMDMSHAESAH</sequence>
<comment type="function">
    <text evidence="1">Cytochrome bo(3) ubiquinol terminal oxidase is the component of the aerobic respiratory chain of E.coli that predominates when cells are grown at high aeration. Has proton pump activity across the membrane in addition to electron transfer, pumping 2 protons/electron (By similarity).</text>
</comment>
<comment type="subunit">
    <text evidence="1">Heterooctamer of two A chains, two B chains, two C chains and two D chains.</text>
</comment>
<comment type="subcellular location">
    <subcellularLocation>
        <location evidence="1">Cell inner membrane</location>
        <topology evidence="1">Multi-pass membrane protein</topology>
    </subcellularLocation>
</comment>
<comment type="similarity">
    <text evidence="4">Belongs to the cytochrome c oxidase subunit 2 family.</text>
</comment>